<dbReference type="EC" id="1.6.5.2" evidence="1"/>
<dbReference type="EMBL" id="CP000491">
    <property type="protein sequence ID" value="ABL72627.1"/>
    <property type="molecule type" value="Genomic_DNA"/>
</dbReference>
<dbReference type="RefSeq" id="WP_011750788.1">
    <property type="nucleotide sequence ID" value="NC_008688.1"/>
</dbReference>
<dbReference type="SMR" id="A1BAT3"/>
<dbReference type="EnsemblBacteria" id="ABL72627">
    <property type="protein sequence ID" value="ABL72627"/>
    <property type="gene ID" value="Pden_4564"/>
</dbReference>
<dbReference type="GeneID" id="93454594"/>
<dbReference type="KEGG" id="pde:Pden_4564"/>
<dbReference type="eggNOG" id="COG0655">
    <property type="taxonomic scope" value="Bacteria"/>
</dbReference>
<dbReference type="HOGENOM" id="CLU_051402_0_2_5"/>
<dbReference type="OrthoDB" id="9801479at2"/>
<dbReference type="Proteomes" id="UP000000361">
    <property type="component" value="Plasmid pPD1222"/>
</dbReference>
<dbReference type="GO" id="GO:0016020">
    <property type="term" value="C:membrane"/>
    <property type="evidence" value="ECO:0007669"/>
    <property type="project" value="TreeGrafter"/>
</dbReference>
<dbReference type="GO" id="GO:0050660">
    <property type="term" value="F:flavin adenine dinucleotide binding"/>
    <property type="evidence" value="ECO:0007669"/>
    <property type="project" value="UniProtKB-UniRule"/>
</dbReference>
<dbReference type="GO" id="GO:0010181">
    <property type="term" value="F:FMN binding"/>
    <property type="evidence" value="ECO:0007669"/>
    <property type="project" value="InterPro"/>
</dbReference>
<dbReference type="GO" id="GO:0051287">
    <property type="term" value="F:NAD binding"/>
    <property type="evidence" value="ECO:0007669"/>
    <property type="project" value="UniProtKB-UniRule"/>
</dbReference>
<dbReference type="GO" id="GO:0050136">
    <property type="term" value="F:NADH:ubiquinone reductase (non-electrogenic) activity"/>
    <property type="evidence" value="ECO:0007669"/>
    <property type="project" value="RHEA"/>
</dbReference>
<dbReference type="GO" id="GO:0050661">
    <property type="term" value="F:NADP binding"/>
    <property type="evidence" value="ECO:0007669"/>
    <property type="project" value="UniProtKB-UniRule"/>
</dbReference>
<dbReference type="GO" id="GO:0008753">
    <property type="term" value="F:NADPH dehydrogenase (quinone) activity"/>
    <property type="evidence" value="ECO:0007669"/>
    <property type="project" value="RHEA"/>
</dbReference>
<dbReference type="FunFam" id="3.40.50.360:FF:000001">
    <property type="entry name" value="NAD(P)H dehydrogenase (Quinone) FQR1-like"/>
    <property type="match status" value="1"/>
</dbReference>
<dbReference type="Gene3D" id="3.40.50.360">
    <property type="match status" value="1"/>
</dbReference>
<dbReference type="HAMAP" id="MF_01017">
    <property type="entry name" value="NQOR"/>
    <property type="match status" value="1"/>
</dbReference>
<dbReference type="InterPro" id="IPR008254">
    <property type="entry name" value="Flavodoxin/NO_synth"/>
</dbReference>
<dbReference type="InterPro" id="IPR029039">
    <property type="entry name" value="Flavoprotein-like_sf"/>
</dbReference>
<dbReference type="InterPro" id="IPR010089">
    <property type="entry name" value="Flavoprotein_WrbA-like"/>
</dbReference>
<dbReference type="InterPro" id="IPR005025">
    <property type="entry name" value="FMN_Rdtase-like_dom"/>
</dbReference>
<dbReference type="InterPro" id="IPR037513">
    <property type="entry name" value="NQO"/>
</dbReference>
<dbReference type="NCBIfam" id="TIGR01755">
    <property type="entry name" value="flav_wrbA"/>
    <property type="match status" value="1"/>
</dbReference>
<dbReference type="NCBIfam" id="NF002999">
    <property type="entry name" value="PRK03767.1"/>
    <property type="match status" value="1"/>
</dbReference>
<dbReference type="PANTHER" id="PTHR30546">
    <property type="entry name" value="FLAVODOXIN-RELATED PROTEIN WRBA-RELATED"/>
    <property type="match status" value="1"/>
</dbReference>
<dbReference type="PANTHER" id="PTHR30546:SF23">
    <property type="entry name" value="FLAVOPROTEIN-LIKE PROTEIN YCP4-RELATED"/>
    <property type="match status" value="1"/>
</dbReference>
<dbReference type="Pfam" id="PF03358">
    <property type="entry name" value="FMN_red"/>
    <property type="match status" value="1"/>
</dbReference>
<dbReference type="SUPFAM" id="SSF52218">
    <property type="entry name" value="Flavoproteins"/>
    <property type="match status" value="1"/>
</dbReference>
<dbReference type="PROSITE" id="PS50902">
    <property type="entry name" value="FLAVODOXIN_LIKE"/>
    <property type="match status" value="1"/>
</dbReference>
<evidence type="ECO:0000255" key="1">
    <source>
        <dbReference type="HAMAP-Rule" id="MF_01017"/>
    </source>
</evidence>
<evidence type="ECO:0000256" key="2">
    <source>
        <dbReference type="SAM" id="MobiDB-lite"/>
    </source>
</evidence>
<sequence>MTDVLVLYYSSYGHVETMAAAVAQGAREAGARVAVRRVPELVPEAVAERAGYKQDQRAPVATVGELADYDAIIIGTPTRFGNMASQMKNFLDQTGGLWAEDRLVGKVGSVFTSTGSQHGGQETTIQSTHTVLLHLGMIVVGLPYSFKGQMRMDEITGGSPYGASTLADDGDGGDRQPSANELDGARFQGRHVAEIAAALVAGRKREAA</sequence>
<comment type="catalytic activity">
    <reaction evidence="1">
        <text>a quinone + NADH + H(+) = a quinol + NAD(+)</text>
        <dbReference type="Rhea" id="RHEA:46160"/>
        <dbReference type="ChEBI" id="CHEBI:15378"/>
        <dbReference type="ChEBI" id="CHEBI:24646"/>
        <dbReference type="ChEBI" id="CHEBI:57540"/>
        <dbReference type="ChEBI" id="CHEBI:57945"/>
        <dbReference type="ChEBI" id="CHEBI:132124"/>
        <dbReference type="EC" id="1.6.5.2"/>
    </reaction>
</comment>
<comment type="catalytic activity">
    <reaction evidence="1">
        <text>a quinone + NADPH + H(+) = a quinol + NADP(+)</text>
        <dbReference type="Rhea" id="RHEA:46164"/>
        <dbReference type="ChEBI" id="CHEBI:15378"/>
        <dbReference type="ChEBI" id="CHEBI:24646"/>
        <dbReference type="ChEBI" id="CHEBI:57783"/>
        <dbReference type="ChEBI" id="CHEBI:58349"/>
        <dbReference type="ChEBI" id="CHEBI:132124"/>
        <dbReference type="EC" id="1.6.5.2"/>
    </reaction>
</comment>
<comment type="cofactor">
    <cofactor evidence="1">
        <name>FMN</name>
        <dbReference type="ChEBI" id="CHEBI:58210"/>
    </cofactor>
    <text evidence="1">Binds 1 FMN per monomer.</text>
</comment>
<comment type="similarity">
    <text evidence="1">Belongs to the WrbA family.</text>
</comment>
<name>NQOR_PARDP</name>
<proteinExistence type="inferred from homology"/>
<protein>
    <recommendedName>
        <fullName evidence="1">NAD(P)H dehydrogenase (quinone)</fullName>
        <ecNumber evidence="1">1.6.5.2</ecNumber>
    </recommendedName>
    <alternativeName>
        <fullName>Flavoprotein WrbA</fullName>
    </alternativeName>
    <alternativeName>
        <fullName evidence="1">NAD(P)H:quinone oxidoreductase</fullName>
        <shortName evidence="1">NQO</shortName>
    </alternativeName>
</protein>
<geneLocation type="plasmid">
    <name>pPD1222</name>
</geneLocation>
<feature type="chain" id="PRO_0000291022" description="NAD(P)H dehydrogenase (quinone)">
    <location>
        <begin position="1"/>
        <end position="208"/>
    </location>
</feature>
<feature type="domain" description="Flavodoxin-like" evidence="1">
    <location>
        <begin position="4"/>
        <end position="192"/>
    </location>
</feature>
<feature type="region of interest" description="Disordered" evidence="2">
    <location>
        <begin position="161"/>
        <end position="183"/>
    </location>
</feature>
<feature type="binding site" evidence="1">
    <location>
        <begin position="10"/>
        <end position="15"/>
    </location>
    <ligand>
        <name>FMN</name>
        <dbReference type="ChEBI" id="CHEBI:58210"/>
    </ligand>
</feature>
<feature type="binding site" evidence="1">
    <location>
        <position position="12"/>
    </location>
    <ligand>
        <name>NAD(+)</name>
        <dbReference type="ChEBI" id="CHEBI:57540"/>
    </ligand>
</feature>
<feature type="binding site" evidence="1">
    <location>
        <begin position="78"/>
        <end position="80"/>
    </location>
    <ligand>
        <name>FMN</name>
        <dbReference type="ChEBI" id="CHEBI:58210"/>
    </ligand>
</feature>
<feature type="binding site" evidence="1">
    <location>
        <position position="98"/>
    </location>
    <ligand>
        <name>substrate</name>
    </ligand>
</feature>
<feature type="binding site" evidence="1">
    <location>
        <begin position="113"/>
        <end position="119"/>
    </location>
    <ligand>
        <name>FMN</name>
        <dbReference type="ChEBI" id="CHEBI:58210"/>
    </ligand>
</feature>
<feature type="binding site" evidence="1">
    <location>
        <position position="134"/>
    </location>
    <ligand>
        <name>FMN</name>
        <dbReference type="ChEBI" id="CHEBI:58210"/>
    </ligand>
</feature>
<accession>A1BAT3</accession>
<gene>
    <name type="ordered locus">Pden_4564</name>
</gene>
<organism>
    <name type="scientific">Paracoccus denitrificans (strain Pd 1222)</name>
    <dbReference type="NCBI Taxonomy" id="318586"/>
    <lineage>
        <taxon>Bacteria</taxon>
        <taxon>Pseudomonadati</taxon>
        <taxon>Pseudomonadota</taxon>
        <taxon>Alphaproteobacteria</taxon>
        <taxon>Rhodobacterales</taxon>
        <taxon>Paracoccaceae</taxon>
        <taxon>Paracoccus</taxon>
    </lineage>
</organism>
<reference key="1">
    <citation type="submission" date="2006-12" db="EMBL/GenBank/DDBJ databases">
        <title>Complete sequence of plasmid 1 of Paracoccus denitrificans PD1222.</title>
        <authorList>
            <person name="Copeland A."/>
            <person name="Lucas S."/>
            <person name="Lapidus A."/>
            <person name="Barry K."/>
            <person name="Detter J.C."/>
            <person name="Glavina del Rio T."/>
            <person name="Hammon N."/>
            <person name="Israni S."/>
            <person name="Dalin E."/>
            <person name="Tice H."/>
            <person name="Pitluck S."/>
            <person name="Munk A.C."/>
            <person name="Brettin T."/>
            <person name="Bruce D."/>
            <person name="Han C."/>
            <person name="Tapia R."/>
            <person name="Gilna P."/>
            <person name="Schmutz J."/>
            <person name="Larimer F."/>
            <person name="Land M."/>
            <person name="Hauser L."/>
            <person name="Kyrpides N."/>
            <person name="Lykidis A."/>
            <person name="Spiro S."/>
            <person name="Richardson D.J."/>
            <person name="Moir J.W.B."/>
            <person name="Ferguson S.J."/>
            <person name="van Spanning R.J.M."/>
            <person name="Richardson P."/>
        </authorList>
    </citation>
    <scope>NUCLEOTIDE SEQUENCE [LARGE SCALE GENOMIC DNA]</scope>
    <source>
        <strain>Pd 1222</strain>
    </source>
</reference>
<keyword id="KW-0285">Flavoprotein</keyword>
<keyword id="KW-0288">FMN</keyword>
<keyword id="KW-0520">NAD</keyword>
<keyword id="KW-0521">NADP</keyword>
<keyword id="KW-0547">Nucleotide-binding</keyword>
<keyword id="KW-0560">Oxidoreductase</keyword>
<keyword id="KW-0614">Plasmid</keyword>
<keyword id="KW-1185">Reference proteome</keyword>